<feature type="chain" id="PRO_0000071361" description="Uncharacterized protein R809">
    <location>
        <begin position="1"/>
        <end position="229"/>
    </location>
</feature>
<feature type="transmembrane region" description="Helical" evidence="1">
    <location>
        <begin position="6"/>
        <end position="26"/>
    </location>
</feature>
<feature type="transmembrane region" description="Helical" evidence="1">
    <location>
        <begin position="36"/>
        <end position="56"/>
    </location>
</feature>
<feature type="transmembrane region" description="Helical" evidence="1">
    <location>
        <begin position="80"/>
        <end position="99"/>
    </location>
</feature>
<feature type="transmembrane region" description="Helical" evidence="1">
    <location>
        <begin position="114"/>
        <end position="134"/>
    </location>
</feature>
<feature type="transmembrane region" description="Helical" evidence="1">
    <location>
        <begin position="144"/>
        <end position="164"/>
    </location>
</feature>
<feature type="transmembrane region" description="Helical" evidence="1">
    <location>
        <begin position="174"/>
        <end position="194"/>
    </location>
</feature>
<feature type="transmembrane region" description="Helical" evidence="1">
    <location>
        <begin position="207"/>
        <end position="224"/>
    </location>
</feature>
<proteinExistence type="inferred from homology"/>
<organismHost>
    <name type="scientific">Acanthamoeba polyphaga</name>
    <name type="common">Amoeba</name>
    <dbReference type="NCBI Taxonomy" id="5757"/>
</organismHost>
<comment type="subcellular location">
    <subcellularLocation>
        <location evidence="2">Membrane</location>
        <topology evidence="2">Multi-pass membrane protein</topology>
    </subcellularLocation>
</comment>
<comment type="similarity">
    <text evidence="2">Belongs to the mimivirus L68/R809 family.</text>
</comment>
<protein>
    <recommendedName>
        <fullName>Uncharacterized protein R809</fullName>
    </recommendedName>
</protein>
<accession>Q5UQI2</accession>
<evidence type="ECO:0000255" key="1"/>
<evidence type="ECO:0000305" key="2"/>
<dbReference type="EMBL" id="AY653733">
    <property type="protein sequence ID" value="AAV51069.1"/>
    <property type="molecule type" value="Genomic_DNA"/>
</dbReference>
<dbReference type="KEGG" id="vg:9925472"/>
<dbReference type="OrthoDB" id="30865at10239"/>
<dbReference type="Proteomes" id="UP000001134">
    <property type="component" value="Genome"/>
</dbReference>
<dbReference type="GO" id="GO:0016020">
    <property type="term" value="C:membrane"/>
    <property type="evidence" value="ECO:0007669"/>
    <property type="project" value="UniProtKB-SubCell"/>
</dbReference>
<name>YR809_MIMIV</name>
<sequence length="229" mass="27318">MLEMQLFFVSYVLYGLGFVSLIFLPTEHQRLYYLHLVSVIIGLIANYEMKFNILLAMFHSAVHNLWPFLKNTGYDDTEKSVYDVFCHTIMMMLCYHRIYYSQNIVIDSEYLFHVLSVLFILGAMINCLVSHLIIDSHHAQLHSIFEYTTIFQAVSTGYWVATMLWYNNLNHQDFYYHWLLWITLMTTNWFIYKFWPKLVGISMRYKYVEAVFIICTWYSGVLSSQKISC</sequence>
<organism>
    <name type="scientific">Acanthamoeba polyphaga mimivirus</name>
    <name type="common">APMV</name>
    <dbReference type="NCBI Taxonomy" id="212035"/>
    <lineage>
        <taxon>Viruses</taxon>
        <taxon>Varidnaviria</taxon>
        <taxon>Bamfordvirae</taxon>
        <taxon>Nucleocytoviricota</taxon>
        <taxon>Megaviricetes</taxon>
        <taxon>Imitervirales</taxon>
        <taxon>Mimiviridae</taxon>
        <taxon>Megamimivirinae</taxon>
        <taxon>Mimivirus</taxon>
        <taxon>Mimivirus bradfordmassiliense</taxon>
    </lineage>
</organism>
<gene>
    <name type="ordered locus">MIMI_R809</name>
</gene>
<keyword id="KW-0472">Membrane</keyword>
<keyword id="KW-1185">Reference proteome</keyword>
<keyword id="KW-0812">Transmembrane</keyword>
<keyword id="KW-1133">Transmembrane helix</keyword>
<reference key="1">
    <citation type="journal article" date="2004" name="Science">
        <title>The 1.2-megabase genome sequence of Mimivirus.</title>
        <authorList>
            <person name="Raoult D."/>
            <person name="Audic S."/>
            <person name="Robert C."/>
            <person name="Abergel C."/>
            <person name="Renesto P."/>
            <person name="Ogata H."/>
            <person name="La Scola B."/>
            <person name="Susan M."/>
            <person name="Claverie J.-M."/>
        </authorList>
    </citation>
    <scope>NUCLEOTIDE SEQUENCE [LARGE SCALE GENOMIC DNA]</scope>
    <source>
        <strain>Rowbotham-Bradford</strain>
    </source>
</reference>